<reference key="1">
    <citation type="journal article" date="2001" name="Plant Physiol.">
        <title>Phylogenetic relationships within cation transporter families of Arabidopsis.</title>
        <authorList>
            <person name="Maeser P."/>
            <person name="Thomine S."/>
            <person name="Schroeder J.I."/>
            <person name="Ward J.M."/>
            <person name="Hirschi K."/>
            <person name="Sze H."/>
            <person name="Talke I.N."/>
            <person name="Amtmann A."/>
            <person name="Maathuis F.J.M."/>
            <person name="Sanders D."/>
            <person name="Harper J.F."/>
            <person name="Tchieu J."/>
            <person name="Gribskov M."/>
            <person name="Persans M.W."/>
            <person name="Salt D.E."/>
            <person name="Kim S.A."/>
            <person name="Guerinot M.L."/>
        </authorList>
    </citation>
    <scope>NUCLEOTIDE SEQUENCE [GENOMIC DNA]</scope>
</reference>
<reference key="2">
    <citation type="journal article" date="1999" name="Nature">
        <title>Sequence and analysis of chromosome 4 of the plant Arabidopsis thaliana.</title>
        <authorList>
            <person name="Mayer K.F.X."/>
            <person name="Schueller C."/>
            <person name="Wambutt R."/>
            <person name="Murphy G."/>
            <person name="Volckaert G."/>
            <person name="Pohl T."/>
            <person name="Duesterhoeft A."/>
            <person name="Stiekema W."/>
            <person name="Entian K.-D."/>
            <person name="Terryn N."/>
            <person name="Harris B."/>
            <person name="Ansorge W."/>
            <person name="Brandt P."/>
            <person name="Grivell L.A."/>
            <person name="Rieger M."/>
            <person name="Weichselgartner M."/>
            <person name="de Simone V."/>
            <person name="Obermaier B."/>
            <person name="Mache R."/>
            <person name="Mueller M."/>
            <person name="Kreis M."/>
            <person name="Delseny M."/>
            <person name="Puigdomenech P."/>
            <person name="Watson M."/>
            <person name="Schmidtheini T."/>
            <person name="Reichert B."/>
            <person name="Portetelle D."/>
            <person name="Perez-Alonso M."/>
            <person name="Boutry M."/>
            <person name="Bancroft I."/>
            <person name="Vos P."/>
            <person name="Hoheisel J."/>
            <person name="Zimmermann W."/>
            <person name="Wedler H."/>
            <person name="Ridley P."/>
            <person name="Langham S.-A."/>
            <person name="McCullagh B."/>
            <person name="Bilham L."/>
            <person name="Robben J."/>
            <person name="van der Schueren J."/>
            <person name="Grymonprez B."/>
            <person name="Chuang Y.-J."/>
            <person name="Vandenbussche F."/>
            <person name="Braeken M."/>
            <person name="Weltjens I."/>
            <person name="Voet M."/>
            <person name="Bastiaens I."/>
            <person name="Aert R."/>
            <person name="Defoor E."/>
            <person name="Weitzenegger T."/>
            <person name="Bothe G."/>
            <person name="Ramsperger U."/>
            <person name="Hilbert H."/>
            <person name="Braun M."/>
            <person name="Holzer E."/>
            <person name="Brandt A."/>
            <person name="Peters S."/>
            <person name="van Staveren M."/>
            <person name="Dirkse W."/>
            <person name="Mooijman P."/>
            <person name="Klein Lankhorst R."/>
            <person name="Rose M."/>
            <person name="Hauf J."/>
            <person name="Koetter P."/>
            <person name="Berneiser S."/>
            <person name="Hempel S."/>
            <person name="Feldpausch M."/>
            <person name="Lamberth S."/>
            <person name="Van den Daele H."/>
            <person name="De Keyser A."/>
            <person name="Buysshaert C."/>
            <person name="Gielen J."/>
            <person name="Villarroel R."/>
            <person name="De Clercq R."/>
            <person name="van Montagu M."/>
            <person name="Rogers J."/>
            <person name="Cronin A."/>
            <person name="Quail M.A."/>
            <person name="Bray-Allen S."/>
            <person name="Clark L."/>
            <person name="Doggett J."/>
            <person name="Hall S."/>
            <person name="Kay M."/>
            <person name="Lennard N."/>
            <person name="McLay K."/>
            <person name="Mayes R."/>
            <person name="Pettett A."/>
            <person name="Rajandream M.A."/>
            <person name="Lyne M."/>
            <person name="Benes V."/>
            <person name="Rechmann S."/>
            <person name="Borkova D."/>
            <person name="Bloecker H."/>
            <person name="Scharfe M."/>
            <person name="Grimm M."/>
            <person name="Loehnert T.-H."/>
            <person name="Dose S."/>
            <person name="de Haan M."/>
            <person name="Maarse A.C."/>
            <person name="Schaefer M."/>
            <person name="Mueller-Auer S."/>
            <person name="Gabel C."/>
            <person name="Fuchs M."/>
            <person name="Fartmann B."/>
            <person name="Granderath K."/>
            <person name="Dauner D."/>
            <person name="Herzl A."/>
            <person name="Neumann S."/>
            <person name="Argiriou A."/>
            <person name="Vitale D."/>
            <person name="Liguori R."/>
            <person name="Piravandi E."/>
            <person name="Massenet O."/>
            <person name="Quigley F."/>
            <person name="Clabauld G."/>
            <person name="Muendlein A."/>
            <person name="Felber R."/>
            <person name="Schnabl S."/>
            <person name="Hiller R."/>
            <person name="Schmidt W."/>
            <person name="Lecharny A."/>
            <person name="Aubourg S."/>
            <person name="Chefdor F."/>
            <person name="Cooke R."/>
            <person name="Berger C."/>
            <person name="Monfort A."/>
            <person name="Casacuberta E."/>
            <person name="Gibbons T."/>
            <person name="Weber N."/>
            <person name="Vandenbol M."/>
            <person name="Bargues M."/>
            <person name="Terol J."/>
            <person name="Torres A."/>
            <person name="Perez-Perez A."/>
            <person name="Purnelle B."/>
            <person name="Bent E."/>
            <person name="Johnson S."/>
            <person name="Tacon D."/>
            <person name="Jesse T."/>
            <person name="Heijnen L."/>
            <person name="Schwarz S."/>
            <person name="Scholler P."/>
            <person name="Heber S."/>
            <person name="Francs P."/>
            <person name="Bielke C."/>
            <person name="Frishman D."/>
            <person name="Haase D."/>
            <person name="Lemcke K."/>
            <person name="Mewes H.-W."/>
            <person name="Stocker S."/>
            <person name="Zaccaria P."/>
            <person name="Bevan M."/>
            <person name="Wilson R.K."/>
            <person name="de la Bastide M."/>
            <person name="Habermann K."/>
            <person name="Parnell L."/>
            <person name="Dedhia N."/>
            <person name="Gnoj L."/>
            <person name="Schutz K."/>
            <person name="Huang E."/>
            <person name="Spiegel L."/>
            <person name="Sekhon M."/>
            <person name="Murray J."/>
            <person name="Sheet P."/>
            <person name="Cordes M."/>
            <person name="Abu-Threideh J."/>
            <person name="Stoneking T."/>
            <person name="Kalicki J."/>
            <person name="Graves T."/>
            <person name="Harmon G."/>
            <person name="Edwards J."/>
            <person name="Latreille P."/>
            <person name="Courtney L."/>
            <person name="Cloud J."/>
            <person name="Abbott A."/>
            <person name="Scott K."/>
            <person name="Johnson D."/>
            <person name="Minx P."/>
            <person name="Bentley D."/>
            <person name="Fulton B."/>
            <person name="Miller N."/>
            <person name="Greco T."/>
            <person name="Kemp K."/>
            <person name="Kramer J."/>
            <person name="Fulton L."/>
            <person name="Mardis E."/>
            <person name="Dante M."/>
            <person name="Pepin K."/>
            <person name="Hillier L.W."/>
            <person name="Nelson J."/>
            <person name="Spieth J."/>
            <person name="Ryan E."/>
            <person name="Andrews S."/>
            <person name="Geisel C."/>
            <person name="Layman D."/>
            <person name="Du H."/>
            <person name="Ali J."/>
            <person name="Berghoff A."/>
            <person name="Jones K."/>
            <person name="Drone K."/>
            <person name="Cotton M."/>
            <person name="Joshu C."/>
            <person name="Antonoiu B."/>
            <person name="Zidanic M."/>
            <person name="Strong C."/>
            <person name="Sun H."/>
            <person name="Lamar B."/>
            <person name="Yordan C."/>
            <person name="Ma P."/>
            <person name="Zhong J."/>
            <person name="Preston R."/>
            <person name="Vil D."/>
            <person name="Shekher M."/>
            <person name="Matero A."/>
            <person name="Shah R."/>
            <person name="Swaby I.K."/>
            <person name="O'Shaughnessy A."/>
            <person name="Rodriguez M."/>
            <person name="Hoffman J."/>
            <person name="Till S."/>
            <person name="Granat S."/>
            <person name="Shohdy N."/>
            <person name="Hasegawa A."/>
            <person name="Hameed A."/>
            <person name="Lodhi M."/>
            <person name="Johnson A."/>
            <person name="Chen E."/>
            <person name="Marra M.A."/>
            <person name="Martienssen R."/>
            <person name="McCombie W.R."/>
        </authorList>
    </citation>
    <scope>NUCLEOTIDE SEQUENCE [LARGE SCALE GENOMIC DNA]</scope>
    <source>
        <strain>cv. Columbia</strain>
    </source>
</reference>
<reference key="3">
    <citation type="journal article" date="2017" name="Plant J.">
        <title>Araport11: a complete reannotation of the Arabidopsis thaliana reference genome.</title>
        <authorList>
            <person name="Cheng C.Y."/>
            <person name="Krishnakumar V."/>
            <person name="Chan A.P."/>
            <person name="Thibaud-Nissen F."/>
            <person name="Schobel S."/>
            <person name="Town C.D."/>
        </authorList>
    </citation>
    <scope>GENOME REANNOTATION</scope>
    <source>
        <strain>cv. Columbia</strain>
    </source>
</reference>
<reference key="4">
    <citation type="journal article" date="2003" name="J. Biol. Chem.">
        <title>Expression profiles of Arabidopsis thaliana in mineral deficiencies reveal novel transporters involved in metal homeostasis.</title>
        <authorList>
            <person name="Wintz H."/>
            <person name="Fox T."/>
            <person name="Wu Y.-Y."/>
            <person name="Feng V."/>
            <person name="Chen W."/>
            <person name="Chang H.-S."/>
            <person name="Zhu T."/>
            <person name="Vulpe C.D."/>
        </authorList>
    </citation>
    <scope>INDUCTION</scope>
</reference>
<reference key="5">
    <citation type="journal article" date="2015" name="Plant J.">
        <title>Identification of putative target genes of bZIP19, a transcription factor essential for Arabidopsis adaptation to Zn deficiency in roots.</title>
        <authorList>
            <person name="Inaba S."/>
            <person name="Kurata R."/>
            <person name="Kobayashi M."/>
            <person name="Yamagishi Y."/>
            <person name="Mori I."/>
            <person name="Ogata Y."/>
            <person name="Fukao Y."/>
        </authorList>
    </citation>
    <scope>FUNCTION</scope>
    <scope>INDUCTION</scope>
</reference>
<dbReference type="EMBL" id="AF369912">
    <property type="protein sequence ID" value="AAL38435.1"/>
    <property type="molecule type" value="Genomic_DNA"/>
</dbReference>
<dbReference type="EMBL" id="AL031804">
    <property type="protein sequence ID" value="CAA21211.1"/>
    <property type="molecule type" value="Genomic_DNA"/>
</dbReference>
<dbReference type="EMBL" id="AL161582">
    <property type="protein sequence ID" value="CAB80019.1"/>
    <property type="molecule type" value="Genomic_DNA"/>
</dbReference>
<dbReference type="EMBL" id="CP002687">
    <property type="protein sequence ID" value="AEE86161.1"/>
    <property type="molecule type" value="Genomic_DNA"/>
</dbReference>
<dbReference type="PIR" id="T05310">
    <property type="entry name" value="T05310"/>
</dbReference>
<dbReference type="RefSeq" id="NP_195028.1">
    <property type="nucleotide sequence ID" value="NM_119456.2"/>
</dbReference>
<dbReference type="FunCoup" id="O82643">
    <property type="interactions" value="2492"/>
</dbReference>
<dbReference type="STRING" id="3702.O82643"/>
<dbReference type="iPTMnet" id="O82643"/>
<dbReference type="PaxDb" id="3702-AT4G33020.1"/>
<dbReference type="ProteomicsDB" id="232336"/>
<dbReference type="EnsemblPlants" id="AT4G33020.1">
    <property type="protein sequence ID" value="AT4G33020.1"/>
    <property type="gene ID" value="AT4G33020"/>
</dbReference>
<dbReference type="GeneID" id="829439"/>
<dbReference type="Gramene" id="AT4G33020.1">
    <property type="protein sequence ID" value="AT4G33020.1"/>
    <property type="gene ID" value="AT4G33020"/>
</dbReference>
<dbReference type="KEGG" id="ath:AT4G33020"/>
<dbReference type="Araport" id="AT4G33020"/>
<dbReference type="TAIR" id="AT4G33020">
    <property type="gene designation" value="ZIP9"/>
</dbReference>
<dbReference type="eggNOG" id="KOG1558">
    <property type="taxonomic scope" value="Eukaryota"/>
</dbReference>
<dbReference type="HOGENOM" id="CLU_027089_3_0_1"/>
<dbReference type="InParanoid" id="O82643"/>
<dbReference type="OMA" id="HESMCAF"/>
<dbReference type="OrthoDB" id="448280at2759"/>
<dbReference type="PhylomeDB" id="O82643"/>
<dbReference type="PRO" id="PR:O82643"/>
<dbReference type="Proteomes" id="UP000006548">
    <property type="component" value="Chromosome 4"/>
</dbReference>
<dbReference type="ExpressionAtlas" id="O82643">
    <property type="expression patterns" value="baseline and differential"/>
</dbReference>
<dbReference type="GO" id="GO:0005886">
    <property type="term" value="C:plasma membrane"/>
    <property type="evidence" value="ECO:0007669"/>
    <property type="project" value="UniProtKB-SubCell"/>
</dbReference>
<dbReference type="GO" id="GO:0005385">
    <property type="term" value="F:zinc ion transmembrane transporter activity"/>
    <property type="evidence" value="ECO:0007669"/>
    <property type="project" value="InterPro"/>
</dbReference>
<dbReference type="GO" id="GO:0010043">
    <property type="term" value="P:response to zinc ion"/>
    <property type="evidence" value="ECO:0000270"/>
    <property type="project" value="TAIR"/>
</dbReference>
<dbReference type="GO" id="GO:0071577">
    <property type="term" value="P:zinc ion transmembrane transport"/>
    <property type="evidence" value="ECO:0000315"/>
    <property type="project" value="UniProtKB"/>
</dbReference>
<dbReference type="InterPro" id="IPR003689">
    <property type="entry name" value="ZIP"/>
</dbReference>
<dbReference type="InterPro" id="IPR004698">
    <property type="entry name" value="Zn/Fe_permease_fun/pln"/>
</dbReference>
<dbReference type="NCBIfam" id="TIGR00820">
    <property type="entry name" value="zip"/>
    <property type="match status" value="1"/>
</dbReference>
<dbReference type="PANTHER" id="PTHR11040:SF156">
    <property type="entry name" value="ZINC TRANSPORTER 9"/>
    <property type="match status" value="1"/>
</dbReference>
<dbReference type="PANTHER" id="PTHR11040">
    <property type="entry name" value="ZINC/IRON TRANSPORTER"/>
    <property type="match status" value="1"/>
</dbReference>
<dbReference type="Pfam" id="PF02535">
    <property type="entry name" value="Zip"/>
    <property type="match status" value="1"/>
</dbReference>
<gene>
    <name type="primary">ZIP9</name>
    <name type="ordered locus">At4g33020</name>
    <name type="ORF">F26P21.140</name>
</gene>
<comment type="function">
    <text evidence="3">Zinc transporter involved in zinc uptake in roots. Targeted by BZIP19 transcription factor in response to zinc-deficient conditions.</text>
</comment>
<comment type="subcellular location">
    <subcellularLocation>
        <location evidence="4">Cell membrane</location>
        <topology evidence="4">Multi-pass membrane protein</topology>
    </subcellularLocation>
</comment>
<comment type="induction">
    <text evidence="2 3">In shoots and roots by zinc starvation.</text>
</comment>
<comment type="similarity">
    <text evidence="4">Belongs to the ZIP transporter (TC 2.A.5) family.</text>
</comment>
<name>ZIP9_ARATH</name>
<proteinExistence type="evidence at transcript level"/>
<organism>
    <name type="scientific">Arabidopsis thaliana</name>
    <name type="common">Mouse-ear cress</name>
    <dbReference type="NCBI Taxonomy" id="3702"/>
    <lineage>
        <taxon>Eukaryota</taxon>
        <taxon>Viridiplantae</taxon>
        <taxon>Streptophyta</taxon>
        <taxon>Embryophyta</taxon>
        <taxon>Tracheophyta</taxon>
        <taxon>Spermatophyta</taxon>
        <taxon>Magnoliopsida</taxon>
        <taxon>eudicotyledons</taxon>
        <taxon>Gunneridae</taxon>
        <taxon>Pentapetalae</taxon>
        <taxon>rosids</taxon>
        <taxon>malvids</taxon>
        <taxon>Brassicales</taxon>
        <taxon>Brassicaceae</taxon>
        <taxon>Camelineae</taxon>
        <taxon>Arabidopsis</taxon>
    </lineage>
</organism>
<protein>
    <recommendedName>
        <fullName>Zinc transporter 9</fullName>
    </recommendedName>
    <alternativeName>
        <fullName>ZRT/IRT-like protein 9</fullName>
    </alternativeName>
</protein>
<accession>O82643</accession>
<keyword id="KW-1003">Cell membrane</keyword>
<keyword id="KW-0406">Ion transport</keyword>
<keyword id="KW-0472">Membrane</keyword>
<keyword id="KW-1185">Reference proteome</keyword>
<keyword id="KW-0812">Transmembrane</keyword>
<keyword id="KW-1133">Transmembrane helix</keyword>
<keyword id="KW-0813">Transport</keyword>
<keyword id="KW-0862">Zinc</keyword>
<keyword id="KW-0864">Zinc transport</keyword>
<evidence type="ECO:0000255" key="1"/>
<evidence type="ECO:0000269" key="2">
    <source>
    </source>
</evidence>
<evidence type="ECO:0000269" key="3">
    <source>
    </source>
</evidence>
<evidence type="ECO:0000305" key="4"/>
<feature type="chain" id="PRO_0000068762" description="Zinc transporter 9">
    <location>
        <begin position="1"/>
        <end position="344"/>
    </location>
</feature>
<feature type="transmembrane region" description="Helical" evidence="1">
    <location>
        <begin position="1"/>
        <end position="21"/>
    </location>
</feature>
<feature type="topological domain" description="Cytoplasmic" evidence="1">
    <location>
        <begin position="22"/>
        <end position="30"/>
    </location>
</feature>
<feature type="transmembrane region" description="Helical" evidence="1">
    <location>
        <begin position="31"/>
        <end position="51"/>
    </location>
</feature>
<feature type="topological domain" description="Extracellular" evidence="1">
    <location>
        <begin position="52"/>
        <end position="72"/>
    </location>
</feature>
<feature type="transmembrane region" description="Helical" evidence="1">
    <location>
        <begin position="73"/>
        <end position="93"/>
    </location>
</feature>
<feature type="topological domain" description="Cytoplasmic" evidence="1">
    <location>
        <begin position="94"/>
        <end position="188"/>
    </location>
</feature>
<feature type="transmembrane region" description="Helical" evidence="1">
    <location>
        <begin position="189"/>
        <end position="209"/>
    </location>
</feature>
<feature type="topological domain" description="Extracellular" evidence="1">
    <location>
        <begin position="210"/>
        <end position="221"/>
    </location>
</feature>
<feature type="transmembrane region" description="Helical" evidence="1">
    <location>
        <begin position="222"/>
        <end position="242"/>
    </location>
</feature>
<feature type="topological domain" description="Cytoplasmic" evidence="1">
    <location>
        <begin position="243"/>
        <end position="251"/>
    </location>
</feature>
<feature type="transmembrane region" description="Helical" evidence="1">
    <location>
        <begin position="252"/>
        <end position="272"/>
    </location>
</feature>
<feature type="topological domain" description="Extracellular" evidence="1">
    <location>
        <begin position="273"/>
        <end position="291"/>
    </location>
</feature>
<feature type="transmembrane region" description="Helical" evidence="1">
    <location>
        <begin position="292"/>
        <end position="312"/>
    </location>
</feature>
<feature type="topological domain" description="Cytoplasmic" evidence="1">
    <location>
        <begin position="313"/>
        <end position="323"/>
    </location>
</feature>
<feature type="transmembrane region" description="Helical" evidence="1">
    <location>
        <begin position="324"/>
        <end position="344"/>
    </location>
</feature>
<sequence length="344" mass="36151">MASILISGAAGVSIPLVGTLLPLNGGLMRGAKAFAAGVILATGFVHMLSGGSKALSDPCLPEFPWKMFPFPEFFAMVAALLTLLADFMITGYYERKQEKMMNQSVESLGTQVSVMSDPGLESGFLRDQEDGGALHIVGMRAHAEHHRHSLSMGAEGFEALSKRSGVSGHGHGHSHGHGDVGLDSGVRHVVVSQILEMGIVSHSIIIGISLGVSHSPCTIRPLLLALSFHQFFEGFALGGCVAEARLTPRGSAMMAFFFAITTPIGVAVGTAIASSYNSYSVAALVAEGVLDSLSAGILVYMALVDLIAADFLSKKMSVDFRVQVVSYCFLFLGAGMMSALAIWA</sequence>